<gene>
    <name type="primary">FAM124A</name>
</gene>
<name>F124A_PONAB</name>
<reference key="1">
    <citation type="submission" date="2004-11" db="EMBL/GenBank/DDBJ databases">
        <authorList>
            <consortium name="The German cDNA consortium"/>
        </authorList>
    </citation>
    <scope>NUCLEOTIDE SEQUENCE [LARGE SCALE MRNA]</scope>
    <source>
        <tissue>Brain cortex</tissue>
    </source>
</reference>
<evidence type="ECO:0000256" key="1">
    <source>
        <dbReference type="SAM" id="MobiDB-lite"/>
    </source>
</evidence>
<evidence type="ECO:0000305" key="2"/>
<accession>Q5RA50</accession>
<protein>
    <recommendedName>
        <fullName>Protein FAM124A</fullName>
    </recommendedName>
</protein>
<dbReference type="EMBL" id="CR859171">
    <property type="protein sequence ID" value="CAH91360.1"/>
    <property type="molecule type" value="mRNA"/>
</dbReference>
<dbReference type="RefSeq" id="NP_001125802.1">
    <property type="nucleotide sequence ID" value="NM_001132330.1"/>
</dbReference>
<dbReference type="SMR" id="Q5RA50"/>
<dbReference type="FunCoup" id="Q5RA50">
    <property type="interactions" value="38"/>
</dbReference>
<dbReference type="STRING" id="9601.ENSPPYP00000006127"/>
<dbReference type="GeneID" id="100172730"/>
<dbReference type="KEGG" id="pon:100172730"/>
<dbReference type="CTD" id="220108"/>
<dbReference type="eggNOG" id="ENOG502QUA8">
    <property type="taxonomic scope" value="Eukaryota"/>
</dbReference>
<dbReference type="InParanoid" id="Q5RA50"/>
<dbReference type="OrthoDB" id="10023686at2759"/>
<dbReference type="Proteomes" id="UP000001595">
    <property type="component" value="Unplaced"/>
</dbReference>
<dbReference type="InterPro" id="IPR029380">
    <property type="entry name" value="FAM124"/>
</dbReference>
<dbReference type="InterPro" id="IPR046365">
    <property type="entry name" value="FAM124_dom"/>
</dbReference>
<dbReference type="PANTHER" id="PTHR14715">
    <property type="entry name" value="FAM124 DOMAIN-CONTAINING PROTEIN-RELATED"/>
    <property type="match status" value="1"/>
</dbReference>
<dbReference type="PANTHER" id="PTHR14715:SF4">
    <property type="entry name" value="PROTEIN FAM124A"/>
    <property type="match status" value="1"/>
</dbReference>
<dbReference type="Pfam" id="PF15067">
    <property type="entry name" value="FAM124"/>
    <property type="match status" value="1"/>
</dbReference>
<organism>
    <name type="scientific">Pongo abelii</name>
    <name type="common">Sumatran orangutan</name>
    <name type="synonym">Pongo pygmaeus abelii</name>
    <dbReference type="NCBI Taxonomy" id="9601"/>
    <lineage>
        <taxon>Eukaryota</taxon>
        <taxon>Metazoa</taxon>
        <taxon>Chordata</taxon>
        <taxon>Craniata</taxon>
        <taxon>Vertebrata</taxon>
        <taxon>Euteleostomi</taxon>
        <taxon>Mammalia</taxon>
        <taxon>Eutheria</taxon>
        <taxon>Euarchontoglires</taxon>
        <taxon>Primates</taxon>
        <taxon>Haplorrhini</taxon>
        <taxon>Catarrhini</taxon>
        <taxon>Hominidae</taxon>
        <taxon>Pongo</taxon>
    </lineage>
</organism>
<comment type="similarity">
    <text evidence="2">Belongs to the FAM124 family.</text>
</comment>
<keyword id="KW-1185">Reference proteome</keyword>
<feature type="chain" id="PRO_0000286381" description="Protein FAM124A">
    <location>
        <begin position="1"/>
        <end position="546"/>
    </location>
</feature>
<feature type="region of interest" description="Disordered" evidence="1">
    <location>
        <begin position="1"/>
        <end position="37"/>
    </location>
</feature>
<feature type="region of interest" description="Disordered" evidence="1">
    <location>
        <begin position="285"/>
        <end position="361"/>
    </location>
</feature>
<feature type="region of interest" description="Disordered" evidence="1">
    <location>
        <begin position="488"/>
        <end position="546"/>
    </location>
</feature>
<feature type="compositionally biased region" description="Low complexity" evidence="1">
    <location>
        <begin position="24"/>
        <end position="36"/>
    </location>
</feature>
<feature type="compositionally biased region" description="Basic residues" evidence="1">
    <location>
        <begin position="285"/>
        <end position="302"/>
    </location>
</feature>
<feature type="compositionally biased region" description="Polar residues" evidence="1">
    <location>
        <begin position="304"/>
        <end position="324"/>
    </location>
</feature>
<feature type="compositionally biased region" description="Polar residues" evidence="1">
    <location>
        <begin position="347"/>
        <end position="361"/>
    </location>
</feature>
<feature type="compositionally biased region" description="Low complexity" evidence="1">
    <location>
        <begin position="488"/>
        <end position="511"/>
    </location>
</feature>
<proteinExistence type="evidence at transcript level"/>
<sequence>MDPKAGGGGEEDDCVDSGAETGGSDYSHLSSTSSELSVEEAQDPFLVSIHIIADPGESQPLQEAIDNVLAWIHPDLPLFRVSERRACRRRRKPPKGAQPALAVVLFLQEEYGEEQILQLHRTLQQPPWRHHHTEQVHGRFLPYLPCSQDFFTLAPGTPLWAIRPVHYGKEIVRFTVYCRHDNYADSLRFYQLILRRSPSQKKADFCIFPIFSNLDVDIQFSLKRLPCDQCPVPTDSSVLEFRVRDIGELVPLLPNPCSPISEGRWQTEDHDGNKILLQAQRVHKKFPKPGRVHHSSEKKRHSTPLPSTAVPSHTPGSSQQSPLNSPHPGPIRTGLPPGHQQEFAGRANSTPNPPWSFQRSKSLFCLPTGGPSLASSAEPQWFSNTGAPGHRASEWRHGHLLSIDDLEGAQETDVDTGLRLSSSDLSVVSAYSAPSRFCSTVETPLPSERCSSHWAAHKDSREGPLPTVSKVTTEASWASLPFFTKRSSSSSATARAAPPAPSTSTLTDSSPQLPCDSPKVKQTDGDMPPPPGSAGPGDNDMEEFYI</sequence>